<feature type="chain" id="PRO_0000253800" description="Protein lin-28">
    <location>
        <begin position="1"/>
        <end position="214"/>
    </location>
</feature>
<feature type="domain" description="CSD">
    <location>
        <begin position="48"/>
        <end position="116"/>
    </location>
</feature>
<feature type="zinc finger region" description="CCHC-type 1" evidence="2">
    <location>
        <begin position="139"/>
        <end position="156"/>
    </location>
</feature>
<feature type="zinc finger region" description="CCHC-type 2" evidence="2">
    <location>
        <begin position="162"/>
        <end position="179"/>
    </location>
</feature>
<feature type="region of interest" description="Disordered" evidence="3">
    <location>
        <begin position="1"/>
        <end position="22"/>
    </location>
</feature>
<feature type="region of interest" description="Disordered" evidence="3">
    <location>
        <begin position="178"/>
        <end position="214"/>
    </location>
</feature>
<feature type="binding site" evidence="1">
    <location>
        <position position="140"/>
    </location>
    <ligand>
        <name>Zn(2+)</name>
        <dbReference type="ChEBI" id="CHEBI:29105"/>
        <label>1</label>
    </ligand>
</feature>
<feature type="binding site" evidence="1">
    <location>
        <position position="143"/>
    </location>
    <ligand>
        <name>Zn(2+)</name>
        <dbReference type="ChEBI" id="CHEBI:29105"/>
        <label>1</label>
    </ligand>
</feature>
<feature type="binding site" evidence="1">
    <location>
        <position position="149"/>
    </location>
    <ligand>
        <name>Zn(2+)</name>
        <dbReference type="ChEBI" id="CHEBI:29105"/>
        <label>1</label>
    </ligand>
</feature>
<feature type="binding site" evidence="1">
    <location>
        <position position="154"/>
    </location>
    <ligand>
        <name>Zn(2+)</name>
        <dbReference type="ChEBI" id="CHEBI:29105"/>
        <label>1</label>
    </ligand>
</feature>
<feature type="binding site" evidence="1">
    <location>
        <position position="164"/>
    </location>
    <ligand>
        <name>Zn(2+)</name>
        <dbReference type="ChEBI" id="CHEBI:29105"/>
        <label>2</label>
    </ligand>
</feature>
<feature type="binding site" evidence="1">
    <location>
        <position position="167"/>
    </location>
    <ligand>
        <name>Zn(2+)</name>
        <dbReference type="ChEBI" id="CHEBI:29105"/>
        <label>2</label>
    </ligand>
</feature>
<feature type="binding site" evidence="1">
    <location>
        <position position="172"/>
    </location>
    <ligand>
        <name>Zn(2+)</name>
        <dbReference type="ChEBI" id="CHEBI:29105"/>
        <label>2</label>
    </ligand>
</feature>
<feature type="binding site" evidence="1">
    <location>
        <position position="177"/>
    </location>
    <ligand>
        <name>Zn(2+)</name>
        <dbReference type="ChEBI" id="CHEBI:29105"/>
        <label>2</label>
    </ligand>
</feature>
<feature type="sequence conflict" description="In Ref. 1; AAC47478." evidence="4" ref="1">
    <original>ELPDLENLKLTDD</original>
    <variation>DVSELIPNLNNIQLNET</variation>
    <location>
        <begin position="21"/>
        <end position="33"/>
    </location>
</feature>
<feature type="sequence conflict" description="In Ref. 1; AAC47478." evidence="4" ref="1">
    <original>D</original>
    <variation>E</variation>
    <location>
        <position position="40"/>
    </location>
</feature>
<feature type="sequence conflict" description="In Ref. 1; AAC47478." evidence="4" ref="1">
    <original>Y</original>
    <variation>F</variation>
    <location>
        <position position="50"/>
    </location>
</feature>
<feature type="sequence conflict" description="In Ref. 1; AAC47478." evidence="4" ref="1">
    <original>E</original>
    <variation>D</variation>
    <location>
        <position position="187"/>
    </location>
</feature>
<feature type="sequence conflict" description="In Ref. 1; AAC47478." evidence="4" ref="1">
    <original>AARLAAETAASSPRGDHDD</original>
    <variation>EAARRAAEESSSTSDEGSSGIKEEHHEHQVKNETSDDSEQ</variation>
    <location>
        <begin position="196"/>
        <end position="214"/>
    </location>
</feature>
<dbReference type="EMBL" id="U75913">
    <property type="protein sequence ID" value="AAC47477.1"/>
    <property type="molecule type" value="mRNA"/>
</dbReference>
<dbReference type="EMBL" id="U75914">
    <property type="protein sequence ID" value="AAC47478.1"/>
    <property type="molecule type" value="mRNA"/>
</dbReference>
<dbReference type="SMR" id="P91599"/>
<dbReference type="eggNOG" id="KOG3070">
    <property type="taxonomic scope" value="Eukaryota"/>
</dbReference>
<dbReference type="GO" id="GO:0005737">
    <property type="term" value="C:cytoplasm"/>
    <property type="evidence" value="ECO:0000250"/>
    <property type="project" value="UniProtKB"/>
</dbReference>
<dbReference type="GO" id="GO:0005634">
    <property type="term" value="C:nucleus"/>
    <property type="evidence" value="ECO:0007669"/>
    <property type="project" value="TreeGrafter"/>
</dbReference>
<dbReference type="GO" id="GO:0019899">
    <property type="term" value="F:enzyme binding"/>
    <property type="evidence" value="ECO:0007669"/>
    <property type="project" value="UniProtKB-ARBA"/>
</dbReference>
<dbReference type="GO" id="GO:0003729">
    <property type="term" value="F:mRNA binding"/>
    <property type="evidence" value="ECO:0007669"/>
    <property type="project" value="TreeGrafter"/>
</dbReference>
<dbReference type="GO" id="GO:0008270">
    <property type="term" value="F:zinc ion binding"/>
    <property type="evidence" value="ECO:0007669"/>
    <property type="project" value="UniProtKB-KW"/>
</dbReference>
<dbReference type="GO" id="GO:0001708">
    <property type="term" value="P:cell fate specification"/>
    <property type="evidence" value="ECO:0000250"/>
    <property type="project" value="UniProtKB"/>
</dbReference>
<dbReference type="GO" id="GO:0031054">
    <property type="term" value="P:pre-miRNA processing"/>
    <property type="evidence" value="ECO:0007669"/>
    <property type="project" value="TreeGrafter"/>
</dbReference>
<dbReference type="CDD" id="cd04458">
    <property type="entry name" value="CSP_CDS"/>
    <property type="match status" value="1"/>
</dbReference>
<dbReference type="FunFam" id="2.40.50.140:FF:000469">
    <property type="entry name" value="Protein lin-28"/>
    <property type="match status" value="1"/>
</dbReference>
<dbReference type="Gene3D" id="2.40.50.140">
    <property type="entry name" value="Nucleic acid-binding proteins"/>
    <property type="match status" value="1"/>
</dbReference>
<dbReference type="Gene3D" id="4.10.60.10">
    <property type="entry name" value="Zinc finger, CCHC-type"/>
    <property type="match status" value="1"/>
</dbReference>
<dbReference type="InterPro" id="IPR011129">
    <property type="entry name" value="CSD"/>
</dbReference>
<dbReference type="InterPro" id="IPR002059">
    <property type="entry name" value="CSP_DNA-bd"/>
</dbReference>
<dbReference type="InterPro" id="IPR051373">
    <property type="entry name" value="Lin-28_RNA-binding"/>
</dbReference>
<dbReference type="InterPro" id="IPR012340">
    <property type="entry name" value="NA-bd_OB-fold"/>
</dbReference>
<dbReference type="InterPro" id="IPR001878">
    <property type="entry name" value="Znf_CCHC"/>
</dbReference>
<dbReference type="InterPro" id="IPR036875">
    <property type="entry name" value="Znf_CCHC_sf"/>
</dbReference>
<dbReference type="PANTHER" id="PTHR46109">
    <property type="entry name" value="PROTEIN LIN-28"/>
    <property type="match status" value="1"/>
</dbReference>
<dbReference type="PANTHER" id="PTHR46109:SF1">
    <property type="entry name" value="PROTEIN LIN-28 HOMOLOG"/>
    <property type="match status" value="1"/>
</dbReference>
<dbReference type="Pfam" id="PF00313">
    <property type="entry name" value="CSD"/>
    <property type="match status" value="1"/>
</dbReference>
<dbReference type="Pfam" id="PF00098">
    <property type="entry name" value="zf-CCHC"/>
    <property type="match status" value="1"/>
</dbReference>
<dbReference type="PRINTS" id="PR00050">
    <property type="entry name" value="COLDSHOCK"/>
</dbReference>
<dbReference type="SMART" id="SM00357">
    <property type="entry name" value="CSP"/>
    <property type="match status" value="1"/>
</dbReference>
<dbReference type="SMART" id="SM00343">
    <property type="entry name" value="ZnF_C2HC"/>
    <property type="match status" value="2"/>
</dbReference>
<dbReference type="SUPFAM" id="SSF50249">
    <property type="entry name" value="Nucleic acid-binding proteins"/>
    <property type="match status" value="1"/>
</dbReference>
<dbReference type="SUPFAM" id="SSF57756">
    <property type="entry name" value="Retrovirus zinc finger-like domains"/>
    <property type="match status" value="1"/>
</dbReference>
<dbReference type="PROSITE" id="PS51857">
    <property type="entry name" value="CSD_2"/>
    <property type="match status" value="1"/>
</dbReference>
<dbReference type="PROSITE" id="PS50158">
    <property type="entry name" value="ZF_CCHC"/>
    <property type="match status" value="1"/>
</dbReference>
<organism>
    <name type="scientific">Caenorhabditis remanei</name>
    <name type="common">Caenorhabditis vulgaris</name>
    <dbReference type="NCBI Taxonomy" id="31234"/>
    <lineage>
        <taxon>Eukaryota</taxon>
        <taxon>Metazoa</taxon>
        <taxon>Ecdysozoa</taxon>
        <taxon>Nematoda</taxon>
        <taxon>Chromadorea</taxon>
        <taxon>Rhabditida</taxon>
        <taxon>Rhabditina</taxon>
        <taxon>Rhabditomorpha</taxon>
        <taxon>Rhabditoidea</taxon>
        <taxon>Rhabditidae</taxon>
        <taxon>Peloderinae</taxon>
        <taxon>Caenorhabditis</taxon>
    </lineage>
</organism>
<comment type="function">
    <text evidence="1">Heterochronic protein which controls the choice of stage specific cell fates. Regulates the timing of the second larval stage events (L2 events) in the hypodermis (By similarity).</text>
</comment>
<comment type="subcellular location">
    <subcellularLocation>
        <location evidence="1">Cytoplasm</location>
    </subcellularLocation>
</comment>
<comment type="similarity">
    <text evidence="4">Belongs to the lin-28 family.</text>
</comment>
<protein>
    <recommendedName>
        <fullName>Protein lin-28</fullName>
    </recommendedName>
    <alternativeName>
        <fullName>Abnormal cell lineage protein 28</fullName>
    </alternativeName>
</protein>
<sequence>MSTVVSEGRNGGNERYSPQDELPDLENLKLTDDMRVPSFDRLPSPTPRYYGSCKWFNVSKGYGFVIDDITREDLFVHQSNLNMQGFRSLDEGERVSYYIQERSNGKGREAYAVSGEVEGQGLKGSRIHPLGRKKAVSLRCFRCGKFATHKAKSCPNVKTDAKVCYTCGSEEHVSSICPERRRKHRPEQVAAEEAEAARLAAETAASSPRGDHDD</sequence>
<name>LIN28_CAERE</name>
<evidence type="ECO:0000250" key="1"/>
<evidence type="ECO:0000255" key="2">
    <source>
        <dbReference type="PROSITE-ProRule" id="PRU00047"/>
    </source>
</evidence>
<evidence type="ECO:0000256" key="3">
    <source>
        <dbReference type="SAM" id="MobiDB-lite"/>
    </source>
</evidence>
<evidence type="ECO:0000305" key="4"/>
<keyword id="KW-0963">Cytoplasm</keyword>
<keyword id="KW-0217">Developmental protein</keyword>
<keyword id="KW-0479">Metal-binding</keyword>
<keyword id="KW-0677">Repeat</keyword>
<keyword id="KW-0862">Zinc</keyword>
<keyword id="KW-0863">Zinc-finger</keyword>
<proteinExistence type="evidence at transcript level"/>
<gene>
    <name type="primary">lin-28</name>
</gene>
<accession>P91599</accession>
<accession>P91602</accession>
<reference key="1">
    <citation type="journal article" date="1997" name="Cell">
        <title>The cold shock domain protein LIN-28 controls developmental timing in C. elegans and is regulated by the lin-4 RNA.</title>
        <authorList>
            <person name="Moss E.G."/>
            <person name="Lee R.C."/>
            <person name="Ambros V."/>
        </authorList>
    </citation>
    <scope>NUCLEOTIDE SEQUENCE [MRNA]</scope>
</reference>